<keyword id="KW-0413">Isomerase</keyword>
<keyword id="KW-0819">tRNA processing</keyword>
<proteinExistence type="inferred from homology"/>
<feature type="chain" id="PRO_1000017090" description="tRNA pseudouridine synthase A">
    <location>
        <begin position="1"/>
        <end position="269"/>
    </location>
</feature>
<feature type="active site" description="Nucleophile" evidence="1">
    <location>
        <position position="51"/>
    </location>
</feature>
<feature type="binding site" evidence="1">
    <location>
        <position position="109"/>
    </location>
    <ligand>
        <name>substrate</name>
    </ligand>
</feature>
<dbReference type="EC" id="5.4.99.12" evidence="1"/>
<dbReference type="EMBL" id="CP000672">
    <property type="protein sequence ID" value="ABR00738.1"/>
    <property type="molecule type" value="Genomic_DNA"/>
</dbReference>
<dbReference type="SMR" id="A5UIY2"/>
<dbReference type="KEGG" id="hiq:CGSHiGG_09855"/>
<dbReference type="HOGENOM" id="CLU_014673_0_2_6"/>
<dbReference type="Proteomes" id="UP000001990">
    <property type="component" value="Chromosome"/>
</dbReference>
<dbReference type="GO" id="GO:0003723">
    <property type="term" value="F:RNA binding"/>
    <property type="evidence" value="ECO:0007669"/>
    <property type="project" value="InterPro"/>
</dbReference>
<dbReference type="GO" id="GO:0160147">
    <property type="term" value="F:tRNA pseudouridine(38-40) synthase activity"/>
    <property type="evidence" value="ECO:0007669"/>
    <property type="project" value="UniProtKB-EC"/>
</dbReference>
<dbReference type="GO" id="GO:0031119">
    <property type="term" value="P:tRNA pseudouridine synthesis"/>
    <property type="evidence" value="ECO:0007669"/>
    <property type="project" value="UniProtKB-UniRule"/>
</dbReference>
<dbReference type="CDD" id="cd02570">
    <property type="entry name" value="PseudoU_synth_EcTruA"/>
    <property type="match status" value="1"/>
</dbReference>
<dbReference type="FunFam" id="3.30.70.580:FF:000001">
    <property type="entry name" value="tRNA pseudouridine synthase A"/>
    <property type="match status" value="1"/>
</dbReference>
<dbReference type="FunFam" id="3.30.70.660:FF:000001">
    <property type="entry name" value="tRNA pseudouridine synthase A"/>
    <property type="match status" value="1"/>
</dbReference>
<dbReference type="Gene3D" id="3.30.70.660">
    <property type="entry name" value="Pseudouridine synthase I, catalytic domain, C-terminal subdomain"/>
    <property type="match status" value="1"/>
</dbReference>
<dbReference type="Gene3D" id="3.30.70.580">
    <property type="entry name" value="Pseudouridine synthase I, catalytic domain, N-terminal subdomain"/>
    <property type="match status" value="1"/>
</dbReference>
<dbReference type="HAMAP" id="MF_00171">
    <property type="entry name" value="TruA"/>
    <property type="match status" value="1"/>
</dbReference>
<dbReference type="InterPro" id="IPR020103">
    <property type="entry name" value="PsdUridine_synth_cat_dom_sf"/>
</dbReference>
<dbReference type="InterPro" id="IPR001406">
    <property type="entry name" value="PsdUridine_synth_TruA"/>
</dbReference>
<dbReference type="InterPro" id="IPR020097">
    <property type="entry name" value="PsdUridine_synth_TruA_a/b_dom"/>
</dbReference>
<dbReference type="InterPro" id="IPR020095">
    <property type="entry name" value="PsdUridine_synth_TruA_C"/>
</dbReference>
<dbReference type="InterPro" id="IPR020094">
    <property type="entry name" value="TruA/RsuA/RluB/E/F_N"/>
</dbReference>
<dbReference type="NCBIfam" id="TIGR00071">
    <property type="entry name" value="hisT_truA"/>
    <property type="match status" value="1"/>
</dbReference>
<dbReference type="PANTHER" id="PTHR11142">
    <property type="entry name" value="PSEUDOURIDYLATE SYNTHASE"/>
    <property type="match status" value="1"/>
</dbReference>
<dbReference type="PANTHER" id="PTHR11142:SF0">
    <property type="entry name" value="TRNA PSEUDOURIDINE SYNTHASE-LIKE 1"/>
    <property type="match status" value="1"/>
</dbReference>
<dbReference type="Pfam" id="PF01416">
    <property type="entry name" value="PseudoU_synth_1"/>
    <property type="match status" value="2"/>
</dbReference>
<dbReference type="PIRSF" id="PIRSF001430">
    <property type="entry name" value="tRNA_psdUrid_synth"/>
    <property type="match status" value="1"/>
</dbReference>
<dbReference type="SUPFAM" id="SSF55120">
    <property type="entry name" value="Pseudouridine synthase"/>
    <property type="match status" value="1"/>
</dbReference>
<reference key="1">
    <citation type="journal article" date="2007" name="Genome Biol.">
        <title>Characterization and modeling of the Haemophilus influenzae core and supragenomes based on the complete genomic sequences of Rd and 12 clinical nontypeable strains.</title>
        <authorList>
            <person name="Hogg J.S."/>
            <person name="Hu F.Z."/>
            <person name="Janto B."/>
            <person name="Boissy R."/>
            <person name="Hayes J."/>
            <person name="Keefe R."/>
            <person name="Post J.C."/>
            <person name="Ehrlich G.D."/>
        </authorList>
    </citation>
    <scope>NUCLEOTIDE SEQUENCE [LARGE SCALE GENOMIC DNA]</scope>
    <source>
        <strain>PittGG</strain>
    </source>
</reference>
<protein>
    <recommendedName>
        <fullName evidence="1">tRNA pseudouridine synthase A</fullName>
        <ecNumber evidence="1">5.4.99.12</ecNumber>
    </recommendedName>
    <alternativeName>
        <fullName evidence="1">tRNA pseudouridine(38-40) synthase</fullName>
    </alternativeName>
    <alternativeName>
        <fullName evidence="1">tRNA pseudouridylate synthase I</fullName>
    </alternativeName>
    <alternativeName>
        <fullName evidence="1">tRNA-uridine isomerase I</fullName>
    </alternativeName>
</protein>
<gene>
    <name evidence="1" type="primary">truA</name>
    <name type="ordered locus">CGSHiGG_09855</name>
</gene>
<comment type="function">
    <text evidence="1">Formation of pseudouridine at positions 38, 39 and 40 in the anticodon stem and loop of transfer RNAs.</text>
</comment>
<comment type="catalytic activity">
    <reaction evidence="1">
        <text>uridine(38/39/40) in tRNA = pseudouridine(38/39/40) in tRNA</text>
        <dbReference type="Rhea" id="RHEA:22376"/>
        <dbReference type="Rhea" id="RHEA-COMP:10085"/>
        <dbReference type="Rhea" id="RHEA-COMP:10087"/>
        <dbReference type="ChEBI" id="CHEBI:65314"/>
        <dbReference type="ChEBI" id="CHEBI:65315"/>
        <dbReference type="EC" id="5.4.99.12"/>
    </reaction>
</comment>
<comment type="subunit">
    <text evidence="1">Homodimer.</text>
</comment>
<comment type="similarity">
    <text evidence="1">Belongs to the tRNA pseudouridine synthase TruA family.</text>
</comment>
<sequence length="269" mass="30484">MKIALGIEYNGQNYYGWQRQEKVRSVQEELEKALSHIANEKIDIFCAGRTDSGVSGTGQVVHFETNAIRPEKAWAFGTNAHLPDDIAVAWAKQVDDEFHARFSATARRYRYILYCNKLRSAILAGGITHCHLDLDAEKMHQAGQCLLGEQDFSSFRAAQCQSHTPWRNVHHLNVSRIGKYIIVDIQANAFVHHMVRNIVGSLIEVGAGNQPIEWMQWLLEQKNRQLAAPTAKPDGLYLVDVIYPQKFDIPKRPIGPLFLEDGLLNRPLK</sequence>
<name>TRUA_HAEIG</name>
<accession>A5UIY2</accession>
<evidence type="ECO:0000255" key="1">
    <source>
        <dbReference type="HAMAP-Rule" id="MF_00171"/>
    </source>
</evidence>
<organism>
    <name type="scientific">Haemophilus influenzae (strain PittGG)</name>
    <dbReference type="NCBI Taxonomy" id="374931"/>
    <lineage>
        <taxon>Bacteria</taxon>
        <taxon>Pseudomonadati</taxon>
        <taxon>Pseudomonadota</taxon>
        <taxon>Gammaproteobacteria</taxon>
        <taxon>Pasteurellales</taxon>
        <taxon>Pasteurellaceae</taxon>
        <taxon>Haemophilus</taxon>
    </lineage>
</organism>